<feature type="chain" id="PRO_1000195837" description="Protein SlyX">
    <location>
        <begin position="1"/>
        <end position="72"/>
    </location>
</feature>
<feature type="region of interest" description="Disordered" evidence="2">
    <location>
        <begin position="52"/>
        <end position="72"/>
    </location>
</feature>
<feature type="compositionally biased region" description="Polar residues" evidence="2">
    <location>
        <begin position="55"/>
        <end position="65"/>
    </location>
</feature>
<proteinExistence type="inferred from homology"/>
<organism>
    <name type="scientific">Escherichia coli O45:K1 (strain S88 / ExPEC)</name>
    <dbReference type="NCBI Taxonomy" id="585035"/>
    <lineage>
        <taxon>Bacteria</taxon>
        <taxon>Pseudomonadati</taxon>
        <taxon>Pseudomonadota</taxon>
        <taxon>Gammaproteobacteria</taxon>
        <taxon>Enterobacterales</taxon>
        <taxon>Enterobacteriaceae</taxon>
        <taxon>Escherichia</taxon>
    </lineage>
</organism>
<sequence>MQDLSLEARLAELESRLAFQEITIEELNVTVTAHEMEMAKLRDHLRLLTEKLKASQPSNIASQAEETPPPHY</sequence>
<accession>B7MCW3</accession>
<reference key="1">
    <citation type="journal article" date="2009" name="PLoS Genet.">
        <title>Organised genome dynamics in the Escherichia coli species results in highly diverse adaptive paths.</title>
        <authorList>
            <person name="Touchon M."/>
            <person name="Hoede C."/>
            <person name="Tenaillon O."/>
            <person name="Barbe V."/>
            <person name="Baeriswyl S."/>
            <person name="Bidet P."/>
            <person name="Bingen E."/>
            <person name="Bonacorsi S."/>
            <person name="Bouchier C."/>
            <person name="Bouvet O."/>
            <person name="Calteau A."/>
            <person name="Chiapello H."/>
            <person name="Clermont O."/>
            <person name="Cruveiller S."/>
            <person name="Danchin A."/>
            <person name="Diard M."/>
            <person name="Dossat C."/>
            <person name="Karoui M.E."/>
            <person name="Frapy E."/>
            <person name="Garry L."/>
            <person name="Ghigo J.M."/>
            <person name="Gilles A.M."/>
            <person name="Johnson J."/>
            <person name="Le Bouguenec C."/>
            <person name="Lescat M."/>
            <person name="Mangenot S."/>
            <person name="Martinez-Jehanne V."/>
            <person name="Matic I."/>
            <person name="Nassif X."/>
            <person name="Oztas S."/>
            <person name="Petit M.A."/>
            <person name="Pichon C."/>
            <person name="Rouy Z."/>
            <person name="Ruf C.S."/>
            <person name="Schneider D."/>
            <person name="Tourret J."/>
            <person name="Vacherie B."/>
            <person name="Vallenet D."/>
            <person name="Medigue C."/>
            <person name="Rocha E.P.C."/>
            <person name="Denamur E."/>
        </authorList>
    </citation>
    <scope>NUCLEOTIDE SEQUENCE [LARGE SCALE GENOMIC DNA]</scope>
    <source>
        <strain>S88 / ExPEC</strain>
    </source>
</reference>
<protein>
    <recommendedName>
        <fullName evidence="1">Protein SlyX</fullName>
    </recommendedName>
</protein>
<name>SLYX_ECO45</name>
<comment type="similarity">
    <text evidence="1">Belongs to the SlyX family.</text>
</comment>
<dbReference type="EMBL" id="CU928161">
    <property type="protein sequence ID" value="CAR04952.1"/>
    <property type="molecule type" value="Genomic_DNA"/>
</dbReference>
<dbReference type="RefSeq" id="WP_001153615.1">
    <property type="nucleotide sequence ID" value="NC_011742.1"/>
</dbReference>
<dbReference type="SMR" id="B7MCW3"/>
<dbReference type="KEGG" id="ecz:ECS88_3736"/>
<dbReference type="HOGENOM" id="CLU_180796_4_2_6"/>
<dbReference type="Proteomes" id="UP000000747">
    <property type="component" value="Chromosome"/>
</dbReference>
<dbReference type="Gene3D" id="1.20.5.300">
    <property type="match status" value="1"/>
</dbReference>
<dbReference type="HAMAP" id="MF_00715">
    <property type="entry name" value="SlyX"/>
    <property type="match status" value="1"/>
</dbReference>
<dbReference type="InterPro" id="IPR007236">
    <property type="entry name" value="SlyX"/>
</dbReference>
<dbReference type="NCBIfam" id="NF002750">
    <property type="entry name" value="PRK02793.1"/>
    <property type="match status" value="1"/>
</dbReference>
<dbReference type="PANTHER" id="PTHR36508">
    <property type="entry name" value="PROTEIN SLYX"/>
    <property type="match status" value="1"/>
</dbReference>
<dbReference type="PANTHER" id="PTHR36508:SF1">
    <property type="entry name" value="PROTEIN SLYX"/>
    <property type="match status" value="1"/>
</dbReference>
<dbReference type="Pfam" id="PF04102">
    <property type="entry name" value="SlyX"/>
    <property type="match status" value="1"/>
</dbReference>
<evidence type="ECO:0000255" key="1">
    <source>
        <dbReference type="HAMAP-Rule" id="MF_00715"/>
    </source>
</evidence>
<evidence type="ECO:0000256" key="2">
    <source>
        <dbReference type="SAM" id="MobiDB-lite"/>
    </source>
</evidence>
<gene>
    <name evidence="1" type="primary">slyX</name>
    <name type="ordered locus">ECS88_3736</name>
</gene>
<keyword id="KW-1185">Reference proteome</keyword>